<feature type="chain" id="PRO_0000283822" description="Cyclin-dependent kinase 15">
    <location>
        <begin position="1"/>
        <end position="433"/>
    </location>
</feature>
<feature type="domain" description="Protein kinase" evidence="3">
    <location>
        <begin position="52"/>
        <end position="336"/>
    </location>
</feature>
<feature type="region of interest" description="Disordered" evidence="5">
    <location>
        <begin position="46"/>
        <end position="83"/>
    </location>
</feature>
<feature type="active site" description="Proton acceptor" evidence="1 3 4">
    <location>
        <position position="173"/>
    </location>
</feature>
<feature type="binding site" evidence="1 3">
    <location>
        <begin position="58"/>
        <end position="66"/>
    </location>
    <ligand>
        <name>ATP</name>
        <dbReference type="ChEBI" id="CHEBI:30616"/>
    </ligand>
</feature>
<feature type="binding site" evidence="1 3">
    <location>
        <position position="81"/>
    </location>
    <ligand>
        <name>ATP</name>
        <dbReference type="ChEBI" id="CHEBI:30616"/>
    </ligand>
</feature>
<feature type="splice variant" id="VSP_052350" description="In isoform 2." evidence="8">
    <location>
        <begin position="1"/>
        <end position="290"/>
    </location>
</feature>
<feature type="splice variant" id="VSP_038766" description="In isoform 3." evidence="7">
    <location>
        <position position="90"/>
    </location>
</feature>
<feature type="splice variant" id="VSP_052351" description="In isoform 2." evidence="8">
    <location>
        <begin position="336"/>
        <end position="398"/>
    </location>
</feature>
<sequence length="433" mass="48457">MGQELCAKRLQPGCSCYHRSEGGEAHSCQRSQPGSTEPAVFELTEASSSTASFHPRGLEAASAQKLKSKRPRSNSDSFQEENLRQGLPWKKSLPFGAASSYLNLEKLGEGSYAKVYKGISRINGQLVALKVISMNAEEGVPFTAIREASLLKGLKHANIVLLHDIVHTKETLTFVFEYMHTDLAQYMSQHPGGLHPHNVRLFMFQLLRGLAYIHHQRVLHRDLKPQNLLLSHLGELKLADFGLARAKSIPSQTYSSEVVTLWYRPPDALLGATEYSSELDIWGAGCIFIEMFQGQPLFPGVSNILEQLEKIWEVLGVPTEDTWPGVSKLPNYNPEWFPPPKPQSLQIVWDRLGGVPEAEDLASQMLKGFPRDRVSAQEALVHDYFSVLPSQLYQLPDEESLFAVSGVKLKPEMCDLSASYRKRHHLVGVNKCW</sequence>
<accession>Q3V3A1</accession>
<accession>B2RVR3</accession>
<accession>B7ZWG3</accession>
<proteinExistence type="evidence at transcript level"/>
<name>CDK15_MOUSE</name>
<gene>
    <name type="primary">Cdk15</name>
    <name type="synonym">Als2cr7</name>
    <name type="synonym">Pftk2</name>
</gene>
<keyword id="KW-0025">Alternative splicing</keyword>
<keyword id="KW-0067">ATP-binding</keyword>
<keyword id="KW-0418">Kinase</keyword>
<keyword id="KW-0460">Magnesium</keyword>
<keyword id="KW-0479">Metal-binding</keyword>
<keyword id="KW-0547">Nucleotide-binding</keyword>
<keyword id="KW-1185">Reference proteome</keyword>
<keyword id="KW-0723">Serine/threonine-protein kinase</keyword>
<keyword id="KW-0808">Transferase</keyword>
<organism>
    <name type="scientific">Mus musculus</name>
    <name type="common">Mouse</name>
    <dbReference type="NCBI Taxonomy" id="10090"/>
    <lineage>
        <taxon>Eukaryota</taxon>
        <taxon>Metazoa</taxon>
        <taxon>Chordata</taxon>
        <taxon>Craniata</taxon>
        <taxon>Vertebrata</taxon>
        <taxon>Euteleostomi</taxon>
        <taxon>Mammalia</taxon>
        <taxon>Eutheria</taxon>
        <taxon>Euarchontoglires</taxon>
        <taxon>Glires</taxon>
        <taxon>Rodentia</taxon>
        <taxon>Myomorpha</taxon>
        <taxon>Muroidea</taxon>
        <taxon>Muridae</taxon>
        <taxon>Murinae</taxon>
        <taxon>Mus</taxon>
        <taxon>Mus</taxon>
    </lineage>
</organism>
<comment type="function">
    <text evidence="2">Serine/threonine-protein kinase that acts like an antiapoptotic protein that counters TRAIL/TNFSF10-induced apoptosis by inducing phosphorylation of BIRC5 at 'Thr-34'.</text>
</comment>
<comment type="catalytic activity">
    <reaction evidence="2">
        <text>L-seryl-[protein] + ATP = O-phospho-L-seryl-[protein] + ADP + H(+)</text>
        <dbReference type="Rhea" id="RHEA:17989"/>
        <dbReference type="Rhea" id="RHEA-COMP:9863"/>
        <dbReference type="Rhea" id="RHEA-COMP:11604"/>
        <dbReference type="ChEBI" id="CHEBI:15378"/>
        <dbReference type="ChEBI" id="CHEBI:29999"/>
        <dbReference type="ChEBI" id="CHEBI:30616"/>
        <dbReference type="ChEBI" id="CHEBI:83421"/>
        <dbReference type="ChEBI" id="CHEBI:456216"/>
        <dbReference type="EC" id="2.7.11.22"/>
    </reaction>
</comment>
<comment type="catalytic activity">
    <reaction evidence="2">
        <text>L-threonyl-[protein] + ATP = O-phospho-L-threonyl-[protein] + ADP + H(+)</text>
        <dbReference type="Rhea" id="RHEA:46608"/>
        <dbReference type="Rhea" id="RHEA-COMP:11060"/>
        <dbReference type="Rhea" id="RHEA-COMP:11605"/>
        <dbReference type="ChEBI" id="CHEBI:15378"/>
        <dbReference type="ChEBI" id="CHEBI:30013"/>
        <dbReference type="ChEBI" id="CHEBI:30616"/>
        <dbReference type="ChEBI" id="CHEBI:61977"/>
        <dbReference type="ChEBI" id="CHEBI:456216"/>
        <dbReference type="EC" id="2.7.11.22"/>
    </reaction>
</comment>
<comment type="cofactor">
    <cofactor evidence="1">
        <name>Mg(2+)</name>
        <dbReference type="ChEBI" id="CHEBI:18420"/>
    </cofactor>
</comment>
<comment type="alternative products">
    <event type="alternative splicing"/>
    <isoform>
        <id>Q3V3A1-1</id>
        <name evidence="9">1</name>
        <sequence type="displayed"/>
    </isoform>
    <isoform>
        <id>Q3V3A1-2</id>
        <name evidence="6">2</name>
        <sequence type="described" ref="VSP_052350 VSP_052351"/>
    </isoform>
    <isoform>
        <id>Q3V3A1-3</id>
        <name>3</name>
        <sequence type="described" ref="VSP_038766"/>
    </isoform>
</comment>
<comment type="similarity">
    <text evidence="9">Belongs to the protein kinase superfamily. CMGC Ser/Thr protein kinase family. CDC2/CDKX subfamily.</text>
</comment>
<protein>
    <recommendedName>
        <fullName>Cyclin-dependent kinase 15</fullName>
        <ecNumber evidence="2">2.7.11.22</ecNumber>
    </recommendedName>
    <alternativeName>
        <fullName>Amyotrophic lateral sclerosis 2 chromosomal region candidate gene 7 protein homolog</fullName>
    </alternativeName>
    <alternativeName>
        <fullName>Cell division protein kinase 15</fullName>
    </alternativeName>
    <alternativeName>
        <fullName>Serine/threonine-protein kinase ALS2CR7</fullName>
    </alternativeName>
    <alternativeName>
        <fullName>Serine/threonine-protein kinase PFTAIRE-2</fullName>
    </alternativeName>
</protein>
<evidence type="ECO:0000250" key="1">
    <source>
        <dbReference type="UniProtKB" id="P28523"/>
    </source>
</evidence>
<evidence type="ECO:0000250" key="2">
    <source>
        <dbReference type="UniProtKB" id="Q96Q40"/>
    </source>
</evidence>
<evidence type="ECO:0000255" key="3">
    <source>
        <dbReference type="PROSITE-ProRule" id="PRU00159"/>
    </source>
</evidence>
<evidence type="ECO:0000255" key="4">
    <source>
        <dbReference type="PROSITE-ProRule" id="PRU10027"/>
    </source>
</evidence>
<evidence type="ECO:0000256" key="5">
    <source>
        <dbReference type="SAM" id="MobiDB-lite"/>
    </source>
</evidence>
<evidence type="ECO:0000269" key="6">
    <source>
    </source>
</evidence>
<evidence type="ECO:0000303" key="7">
    <source>
    </source>
</evidence>
<evidence type="ECO:0000303" key="8">
    <source>
    </source>
</evidence>
<evidence type="ECO:0000305" key="9"/>
<evidence type="ECO:0000312" key="10">
    <source>
        <dbReference type="EMBL" id="BAE20636.1"/>
    </source>
</evidence>
<dbReference type="EC" id="2.7.11.22" evidence="2"/>
<dbReference type="EMBL" id="AK042881">
    <property type="protein sequence ID" value="BAE20636.1"/>
    <property type="molecule type" value="mRNA"/>
</dbReference>
<dbReference type="EMBL" id="AC116995">
    <property type="status" value="NOT_ANNOTATED_CDS"/>
    <property type="molecule type" value="Genomic_DNA"/>
</dbReference>
<dbReference type="EMBL" id="BC147314">
    <property type="protein sequence ID" value="AAI47315.1"/>
    <property type="molecule type" value="mRNA"/>
</dbReference>
<dbReference type="EMBL" id="BC147315">
    <property type="protein sequence ID" value="AAI47316.1"/>
    <property type="molecule type" value="mRNA"/>
</dbReference>
<dbReference type="EMBL" id="BC147758">
    <property type="protein sequence ID" value="AAI47759.1"/>
    <property type="molecule type" value="mRNA"/>
</dbReference>
<dbReference type="EMBL" id="BC147763">
    <property type="protein sequence ID" value="AAI47764.1"/>
    <property type="molecule type" value="mRNA"/>
</dbReference>
<dbReference type="EMBL" id="BC172036">
    <property type="protein sequence ID" value="AAI72036.1"/>
    <property type="molecule type" value="mRNA"/>
</dbReference>
<dbReference type="CCDS" id="CCDS48273.1">
    <molecule id="Q3V3A1-1"/>
</dbReference>
<dbReference type="RefSeq" id="NP_001028545.2">
    <molecule id="Q3V3A1-1"/>
    <property type="nucleotide sequence ID" value="NM_001033373.4"/>
</dbReference>
<dbReference type="RefSeq" id="NP_001343318.1">
    <molecule id="Q3V3A1-3"/>
    <property type="nucleotide sequence ID" value="NM_001356389.2"/>
</dbReference>
<dbReference type="RefSeq" id="XP_006496113.1">
    <property type="nucleotide sequence ID" value="XM_006496050.3"/>
</dbReference>
<dbReference type="SMR" id="Q3V3A1"/>
<dbReference type="FunCoup" id="Q3V3A1">
    <property type="interactions" value="1671"/>
</dbReference>
<dbReference type="STRING" id="10090.ENSMUSP00000109886"/>
<dbReference type="iPTMnet" id="Q3V3A1"/>
<dbReference type="PhosphoSitePlus" id="Q3V3A1"/>
<dbReference type="jPOST" id="Q3V3A1"/>
<dbReference type="PaxDb" id="10090-ENSMUSP00000124680"/>
<dbReference type="ProteomicsDB" id="281290">
    <molecule id="Q3V3A1-1"/>
</dbReference>
<dbReference type="ProteomicsDB" id="281292">
    <molecule id="Q3V3A1-3"/>
</dbReference>
<dbReference type="Antibodypedia" id="19940">
    <property type="antibodies" value="263 antibodies from 27 providers"/>
</dbReference>
<dbReference type="DNASU" id="271697"/>
<dbReference type="Ensembl" id="ENSMUST00000114248.3">
    <molecule id="Q3V3A1-1"/>
    <property type="protein sequence ID" value="ENSMUSP00000109886.3"/>
    <property type="gene ID" value="ENSMUSG00000026023.17"/>
</dbReference>
<dbReference type="GeneID" id="271697"/>
<dbReference type="KEGG" id="mmu:271697"/>
<dbReference type="UCSC" id="uc007bdq.2">
    <molecule id="Q3V3A1-3"/>
    <property type="organism name" value="mouse"/>
</dbReference>
<dbReference type="UCSC" id="uc007bdr.2">
    <molecule id="Q3V3A1-1"/>
    <property type="organism name" value="mouse"/>
</dbReference>
<dbReference type="UCSC" id="uc007bds.2">
    <molecule id="Q3V3A1-2"/>
    <property type="organism name" value="mouse"/>
</dbReference>
<dbReference type="AGR" id="MGI:3583944"/>
<dbReference type="CTD" id="65061"/>
<dbReference type="MGI" id="MGI:3583944">
    <property type="gene designation" value="Cdk15"/>
</dbReference>
<dbReference type="VEuPathDB" id="HostDB:ENSMUSG00000026023"/>
<dbReference type="eggNOG" id="KOG0594">
    <property type="taxonomic scope" value="Eukaryota"/>
</dbReference>
<dbReference type="GeneTree" id="ENSGT00940000159606"/>
<dbReference type="HOGENOM" id="CLU_000288_181_6_1"/>
<dbReference type="InParanoid" id="Q3V3A1"/>
<dbReference type="OMA" id="NPEWFLM"/>
<dbReference type="PhylomeDB" id="Q3V3A1"/>
<dbReference type="BioGRID-ORCS" id="271697">
    <property type="hits" value="1 hit in 81 CRISPR screens"/>
</dbReference>
<dbReference type="ChiTaRS" id="Cdk15">
    <property type="organism name" value="mouse"/>
</dbReference>
<dbReference type="PRO" id="PR:Q3V3A1"/>
<dbReference type="Proteomes" id="UP000000589">
    <property type="component" value="Chromosome 1"/>
</dbReference>
<dbReference type="RNAct" id="Q3V3A1">
    <property type="molecule type" value="protein"/>
</dbReference>
<dbReference type="Bgee" id="ENSMUSG00000026023">
    <property type="expression patterns" value="Expressed in animal zygote and 42 other cell types or tissues"/>
</dbReference>
<dbReference type="ExpressionAtlas" id="Q3V3A1">
    <property type="expression patterns" value="baseline and differential"/>
</dbReference>
<dbReference type="GO" id="GO:0005524">
    <property type="term" value="F:ATP binding"/>
    <property type="evidence" value="ECO:0007669"/>
    <property type="project" value="UniProtKB-KW"/>
</dbReference>
<dbReference type="GO" id="GO:0004693">
    <property type="term" value="F:cyclin-dependent protein serine/threonine kinase activity"/>
    <property type="evidence" value="ECO:0007669"/>
    <property type="project" value="UniProtKB-EC"/>
</dbReference>
<dbReference type="GO" id="GO:0046872">
    <property type="term" value="F:metal ion binding"/>
    <property type="evidence" value="ECO:0007669"/>
    <property type="project" value="UniProtKB-KW"/>
</dbReference>
<dbReference type="GO" id="GO:0106310">
    <property type="term" value="F:protein serine kinase activity"/>
    <property type="evidence" value="ECO:0007669"/>
    <property type="project" value="RHEA"/>
</dbReference>
<dbReference type="GO" id="GO:0004674">
    <property type="term" value="F:protein serine/threonine kinase activity"/>
    <property type="evidence" value="ECO:0000250"/>
    <property type="project" value="UniProtKB"/>
</dbReference>
<dbReference type="CDD" id="cd07870">
    <property type="entry name" value="STKc_PFTAIRE2"/>
    <property type="match status" value="1"/>
</dbReference>
<dbReference type="FunFam" id="1.10.510.10:FF:000131">
    <property type="entry name" value="cyclin-dependent kinase 14 isoform X1"/>
    <property type="match status" value="1"/>
</dbReference>
<dbReference type="FunFam" id="3.30.200.20:FF:000007">
    <property type="entry name" value="Cyclin-dependent kinase 14, putative"/>
    <property type="match status" value="1"/>
</dbReference>
<dbReference type="Gene3D" id="3.30.200.20">
    <property type="entry name" value="Phosphorylase Kinase, domain 1"/>
    <property type="match status" value="1"/>
</dbReference>
<dbReference type="Gene3D" id="1.10.510.10">
    <property type="entry name" value="Transferase(Phosphotransferase) domain 1"/>
    <property type="match status" value="1"/>
</dbReference>
<dbReference type="InterPro" id="IPR050108">
    <property type="entry name" value="CDK"/>
</dbReference>
<dbReference type="InterPro" id="IPR042761">
    <property type="entry name" value="CDK15_STKc"/>
</dbReference>
<dbReference type="InterPro" id="IPR011009">
    <property type="entry name" value="Kinase-like_dom_sf"/>
</dbReference>
<dbReference type="InterPro" id="IPR000719">
    <property type="entry name" value="Prot_kinase_dom"/>
</dbReference>
<dbReference type="InterPro" id="IPR017441">
    <property type="entry name" value="Protein_kinase_ATP_BS"/>
</dbReference>
<dbReference type="InterPro" id="IPR008271">
    <property type="entry name" value="Ser/Thr_kinase_AS"/>
</dbReference>
<dbReference type="PANTHER" id="PTHR24056">
    <property type="entry name" value="CELL DIVISION PROTEIN KINASE"/>
    <property type="match status" value="1"/>
</dbReference>
<dbReference type="PANTHER" id="PTHR24056:SF159">
    <property type="entry name" value="CYCLIN-DEPENDENT KINASE 15"/>
    <property type="match status" value="1"/>
</dbReference>
<dbReference type="Pfam" id="PF00069">
    <property type="entry name" value="Pkinase"/>
    <property type="match status" value="1"/>
</dbReference>
<dbReference type="SMART" id="SM00220">
    <property type="entry name" value="S_TKc"/>
    <property type="match status" value="1"/>
</dbReference>
<dbReference type="SUPFAM" id="SSF56112">
    <property type="entry name" value="Protein kinase-like (PK-like)"/>
    <property type="match status" value="1"/>
</dbReference>
<dbReference type="PROSITE" id="PS00107">
    <property type="entry name" value="PROTEIN_KINASE_ATP"/>
    <property type="match status" value="1"/>
</dbReference>
<dbReference type="PROSITE" id="PS50011">
    <property type="entry name" value="PROTEIN_KINASE_DOM"/>
    <property type="match status" value="1"/>
</dbReference>
<dbReference type="PROSITE" id="PS00108">
    <property type="entry name" value="PROTEIN_KINASE_ST"/>
    <property type="match status" value="1"/>
</dbReference>
<reference evidence="9 10" key="1">
    <citation type="journal article" date="2005" name="Science">
        <title>The transcriptional landscape of the mammalian genome.</title>
        <authorList>
            <person name="Carninci P."/>
            <person name="Kasukawa T."/>
            <person name="Katayama S."/>
            <person name="Gough J."/>
            <person name="Frith M.C."/>
            <person name="Maeda N."/>
            <person name="Oyama R."/>
            <person name="Ravasi T."/>
            <person name="Lenhard B."/>
            <person name="Wells C."/>
            <person name="Kodzius R."/>
            <person name="Shimokawa K."/>
            <person name="Bajic V.B."/>
            <person name="Brenner S.E."/>
            <person name="Batalov S."/>
            <person name="Forrest A.R."/>
            <person name="Zavolan M."/>
            <person name="Davis M.J."/>
            <person name="Wilming L.G."/>
            <person name="Aidinis V."/>
            <person name="Allen J.E."/>
            <person name="Ambesi-Impiombato A."/>
            <person name="Apweiler R."/>
            <person name="Aturaliya R.N."/>
            <person name="Bailey T.L."/>
            <person name="Bansal M."/>
            <person name="Baxter L."/>
            <person name="Beisel K.W."/>
            <person name="Bersano T."/>
            <person name="Bono H."/>
            <person name="Chalk A.M."/>
            <person name="Chiu K.P."/>
            <person name="Choudhary V."/>
            <person name="Christoffels A."/>
            <person name="Clutterbuck D.R."/>
            <person name="Crowe M.L."/>
            <person name="Dalla E."/>
            <person name="Dalrymple B.P."/>
            <person name="de Bono B."/>
            <person name="Della Gatta G."/>
            <person name="di Bernardo D."/>
            <person name="Down T."/>
            <person name="Engstrom P."/>
            <person name="Fagiolini M."/>
            <person name="Faulkner G."/>
            <person name="Fletcher C.F."/>
            <person name="Fukushima T."/>
            <person name="Furuno M."/>
            <person name="Futaki S."/>
            <person name="Gariboldi M."/>
            <person name="Georgii-Hemming P."/>
            <person name="Gingeras T.R."/>
            <person name="Gojobori T."/>
            <person name="Green R.E."/>
            <person name="Gustincich S."/>
            <person name="Harbers M."/>
            <person name="Hayashi Y."/>
            <person name="Hensch T.K."/>
            <person name="Hirokawa N."/>
            <person name="Hill D."/>
            <person name="Huminiecki L."/>
            <person name="Iacono M."/>
            <person name="Ikeo K."/>
            <person name="Iwama A."/>
            <person name="Ishikawa T."/>
            <person name="Jakt M."/>
            <person name="Kanapin A."/>
            <person name="Katoh M."/>
            <person name="Kawasawa Y."/>
            <person name="Kelso J."/>
            <person name="Kitamura H."/>
            <person name="Kitano H."/>
            <person name="Kollias G."/>
            <person name="Krishnan S.P."/>
            <person name="Kruger A."/>
            <person name="Kummerfeld S.K."/>
            <person name="Kurochkin I.V."/>
            <person name="Lareau L.F."/>
            <person name="Lazarevic D."/>
            <person name="Lipovich L."/>
            <person name="Liu J."/>
            <person name="Liuni S."/>
            <person name="McWilliam S."/>
            <person name="Madan Babu M."/>
            <person name="Madera M."/>
            <person name="Marchionni L."/>
            <person name="Matsuda H."/>
            <person name="Matsuzawa S."/>
            <person name="Miki H."/>
            <person name="Mignone F."/>
            <person name="Miyake S."/>
            <person name="Morris K."/>
            <person name="Mottagui-Tabar S."/>
            <person name="Mulder N."/>
            <person name="Nakano N."/>
            <person name="Nakauchi H."/>
            <person name="Ng P."/>
            <person name="Nilsson R."/>
            <person name="Nishiguchi S."/>
            <person name="Nishikawa S."/>
            <person name="Nori F."/>
            <person name="Ohara O."/>
            <person name="Okazaki Y."/>
            <person name="Orlando V."/>
            <person name="Pang K.C."/>
            <person name="Pavan W.J."/>
            <person name="Pavesi G."/>
            <person name="Pesole G."/>
            <person name="Petrovsky N."/>
            <person name="Piazza S."/>
            <person name="Reed J."/>
            <person name="Reid J.F."/>
            <person name="Ring B.Z."/>
            <person name="Ringwald M."/>
            <person name="Rost B."/>
            <person name="Ruan Y."/>
            <person name="Salzberg S.L."/>
            <person name="Sandelin A."/>
            <person name="Schneider C."/>
            <person name="Schoenbach C."/>
            <person name="Sekiguchi K."/>
            <person name="Semple C.A."/>
            <person name="Seno S."/>
            <person name="Sessa L."/>
            <person name="Sheng Y."/>
            <person name="Shibata Y."/>
            <person name="Shimada H."/>
            <person name="Shimada K."/>
            <person name="Silva D."/>
            <person name="Sinclair B."/>
            <person name="Sperling S."/>
            <person name="Stupka E."/>
            <person name="Sugiura K."/>
            <person name="Sultana R."/>
            <person name="Takenaka Y."/>
            <person name="Taki K."/>
            <person name="Tammoja K."/>
            <person name="Tan S.L."/>
            <person name="Tang S."/>
            <person name="Taylor M.S."/>
            <person name="Tegner J."/>
            <person name="Teichmann S.A."/>
            <person name="Ueda H.R."/>
            <person name="van Nimwegen E."/>
            <person name="Verardo R."/>
            <person name="Wei C.L."/>
            <person name="Yagi K."/>
            <person name="Yamanishi H."/>
            <person name="Zabarovsky E."/>
            <person name="Zhu S."/>
            <person name="Zimmer A."/>
            <person name="Hide W."/>
            <person name="Bult C."/>
            <person name="Grimmond S.M."/>
            <person name="Teasdale R.D."/>
            <person name="Liu E.T."/>
            <person name="Brusic V."/>
            <person name="Quackenbush J."/>
            <person name="Wahlestedt C."/>
            <person name="Mattick J.S."/>
            <person name="Hume D.A."/>
            <person name="Kai C."/>
            <person name="Sasaki D."/>
            <person name="Tomaru Y."/>
            <person name="Fukuda S."/>
            <person name="Kanamori-Katayama M."/>
            <person name="Suzuki M."/>
            <person name="Aoki J."/>
            <person name="Arakawa T."/>
            <person name="Iida J."/>
            <person name="Imamura K."/>
            <person name="Itoh M."/>
            <person name="Kato T."/>
            <person name="Kawaji H."/>
            <person name="Kawagashira N."/>
            <person name="Kawashima T."/>
            <person name="Kojima M."/>
            <person name="Kondo S."/>
            <person name="Konno H."/>
            <person name="Nakano K."/>
            <person name="Ninomiya N."/>
            <person name="Nishio T."/>
            <person name="Okada M."/>
            <person name="Plessy C."/>
            <person name="Shibata K."/>
            <person name="Shiraki T."/>
            <person name="Suzuki S."/>
            <person name="Tagami M."/>
            <person name="Waki K."/>
            <person name="Watahiki A."/>
            <person name="Okamura-Oho Y."/>
            <person name="Suzuki H."/>
            <person name="Kawai J."/>
            <person name="Hayashizaki Y."/>
        </authorList>
    </citation>
    <scope>NUCLEOTIDE SEQUENCE [LARGE SCALE MRNA] (ISOFORM 2)</scope>
    <source>
        <strain evidence="10">C57BL/6J</strain>
        <tissue evidence="10">Cerebellum</tissue>
    </source>
</reference>
<reference key="2">
    <citation type="journal article" date="2009" name="PLoS Biol.">
        <title>Lineage-specific biology revealed by a finished genome assembly of the mouse.</title>
        <authorList>
            <person name="Church D.M."/>
            <person name="Goodstadt L."/>
            <person name="Hillier L.W."/>
            <person name="Zody M.C."/>
            <person name="Goldstein S."/>
            <person name="She X."/>
            <person name="Bult C.J."/>
            <person name="Agarwala R."/>
            <person name="Cherry J.L."/>
            <person name="DiCuccio M."/>
            <person name="Hlavina W."/>
            <person name="Kapustin Y."/>
            <person name="Meric P."/>
            <person name="Maglott D."/>
            <person name="Birtle Z."/>
            <person name="Marques A.C."/>
            <person name="Graves T."/>
            <person name="Zhou S."/>
            <person name="Teague B."/>
            <person name="Potamousis K."/>
            <person name="Churas C."/>
            <person name="Place M."/>
            <person name="Herschleb J."/>
            <person name="Runnheim R."/>
            <person name="Forrest D."/>
            <person name="Amos-Landgraf J."/>
            <person name="Schwartz D.C."/>
            <person name="Cheng Z."/>
            <person name="Lindblad-Toh K."/>
            <person name="Eichler E.E."/>
            <person name="Ponting C.P."/>
        </authorList>
    </citation>
    <scope>NUCLEOTIDE SEQUENCE [LARGE SCALE GENOMIC DNA]</scope>
    <source>
        <strain>C57BL/6J</strain>
    </source>
</reference>
<reference key="3">
    <citation type="journal article" date="2004" name="Genome Res.">
        <title>The status, quality, and expansion of the NIH full-length cDNA project: the Mammalian Gene Collection (MGC).</title>
        <authorList>
            <consortium name="The MGC Project Team"/>
        </authorList>
    </citation>
    <scope>NUCLEOTIDE SEQUENCE [LARGE SCALE MRNA] (ISOFORMS 1 AND 3)</scope>
    <source>
        <tissue>Brain</tissue>
    </source>
</reference>